<comment type="function">
    <text evidence="1">Catalyzes the irreversible NADPH-dependent deamination of GMP to IMP. It functions in the conversion of nucleobase, nucleoside and nucleotide derivatives of G to A nucleotides, and in maintaining the intracellular balance of A and G nucleotides.</text>
</comment>
<comment type="catalytic activity">
    <reaction evidence="1">
        <text>IMP + NH4(+) + NADP(+) = GMP + NADPH + 2 H(+)</text>
        <dbReference type="Rhea" id="RHEA:17185"/>
        <dbReference type="ChEBI" id="CHEBI:15378"/>
        <dbReference type="ChEBI" id="CHEBI:28938"/>
        <dbReference type="ChEBI" id="CHEBI:57783"/>
        <dbReference type="ChEBI" id="CHEBI:58053"/>
        <dbReference type="ChEBI" id="CHEBI:58115"/>
        <dbReference type="ChEBI" id="CHEBI:58349"/>
        <dbReference type="EC" id="1.7.1.7"/>
    </reaction>
</comment>
<comment type="similarity">
    <text evidence="1">Belongs to the IMPDH/GMPR family. GuaC type 2 subfamily.</text>
</comment>
<name>GUAC_EXISA</name>
<dbReference type="EC" id="1.7.1.7" evidence="1"/>
<dbReference type="EMBL" id="CP001615">
    <property type="protein sequence ID" value="ACQ70751.1"/>
    <property type="molecule type" value="Genomic_DNA"/>
</dbReference>
<dbReference type="RefSeq" id="WP_015880310.1">
    <property type="nucleotide sequence ID" value="NC_012673.1"/>
</dbReference>
<dbReference type="SMR" id="C4L088"/>
<dbReference type="STRING" id="360911.EAT1b_1825"/>
<dbReference type="KEGG" id="eat:EAT1b_1825"/>
<dbReference type="eggNOG" id="COG0516">
    <property type="taxonomic scope" value="Bacteria"/>
</dbReference>
<dbReference type="HOGENOM" id="CLU_022552_5_0_9"/>
<dbReference type="OrthoDB" id="9805398at2"/>
<dbReference type="Proteomes" id="UP000000716">
    <property type="component" value="Chromosome"/>
</dbReference>
<dbReference type="GO" id="GO:0005829">
    <property type="term" value="C:cytosol"/>
    <property type="evidence" value="ECO:0007669"/>
    <property type="project" value="TreeGrafter"/>
</dbReference>
<dbReference type="GO" id="GO:1902560">
    <property type="term" value="C:GMP reductase complex"/>
    <property type="evidence" value="ECO:0007669"/>
    <property type="project" value="InterPro"/>
</dbReference>
<dbReference type="GO" id="GO:0003920">
    <property type="term" value="F:GMP reductase activity"/>
    <property type="evidence" value="ECO:0007669"/>
    <property type="project" value="UniProtKB-UniRule"/>
</dbReference>
<dbReference type="GO" id="GO:0006163">
    <property type="term" value="P:purine nucleotide metabolic process"/>
    <property type="evidence" value="ECO:0007669"/>
    <property type="project" value="UniProtKB-UniRule"/>
</dbReference>
<dbReference type="CDD" id="cd00381">
    <property type="entry name" value="IMPDH"/>
    <property type="match status" value="1"/>
</dbReference>
<dbReference type="FunFam" id="3.20.20.70:FF:000079">
    <property type="entry name" value="GMP reductase"/>
    <property type="match status" value="1"/>
</dbReference>
<dbReference type="Gene3D" id="3.20.20.70">
    <property type="entry name" value="Aldolase class I"/>
    <property type="match status" value="1"/>
</dbReference>
<dbReference type="HAMAP" id="MF_01511">
    <property type="entry name" value="GMP_reduct_type2"/>
    <property type="match status" value="1"/>
</dbReference>
<dbReference type="InterPro" id="IPR013785">
    <property type="entry name" value="Aldolase_TIM"/>
</dbReference>
<dbReference type="InterPro" id="IPR050139">
    <property type="entry name" value="GMP_reductase"/>
</dbReference>
<dbReference type="InterPro" id="IPR005994">
    <property type="entry name" value="GuaC_type_2"/>
</dbReference>
<dbReference type="InterPro" id="IPR015875">
    <property type="entry name" value="IMP_DH/GMP_Rdtase_CS"/>
</dbReference>
<dbReference type="InterPro" id="IPR001093">
    <property type="entry name" value="IMP_DH_GMPRt"/>
</dbReference>
<dbReference type="NCBIfam" id="TIGR01306">
    <property type="entry name" value="GMP_reduct_2"/>
    <property type="match status" value="1"/>
</dbReference>
<dbReference type="NCBIfam" id="NF003966">
    <property type="entry name" value="PRK05458.1"/>
    <property type="match status" value="1"/>
</dbReference>
<dbReference type="PANTHER" id="PTHR43170">
    <property type="entry name" value="GMP REDUCTASE"/>
    <property type="match status" value="1"/>
</dbReference>
<dbReference type="PANTHER" id="PTHR43170:SF5">
    <property type="entry name" value="GMP REDUCTASE"/>
    <property type="match status" value="1"/>
</dbReference>
<dbReference type="Pfam" id="PF00478">
    <property type="entry name" value="IMPDH"/>
    <property type="match status" value="1"/>
</dbReference>
<dbReference type="PIRSF" id="PIRSF036500">
    <property type="entry name" value="GMP_red_Firmic"/>
    <property type="match status" value="1"/>
</dbReference>
<dbReference type="SMART" id="SM01240">
    <property type="entry name" value="IMPDH"/>
    <property type="match status" value="1"/>
</dbReference>
<dbReference type="SUPFAM" id="SSF51412">
    <property type="entry name" value="Inosine monophosphate dehydrogenase (IMPDH)"/>
    <property type="match status" value="1"/>
</dbReference>
<dbReference type="PROSITE" id="PS00487">
    <property type="entry name" value="IMP_DH_GMP_RED"/>
    <property type="match status" value="1"/>
</dbReference>
<reference key="1">
    <citation type="journal article" date="2011" name="J. Bacteriol.">
        <title>Complete genome sequence of the Thermophilic Bacterium Exiguobacterium sp. AT1b.</title>
        <authorList>
            <person name="Vishnivetskaya T.A."/>
            <person name="Lucas S."/>
            <person name="Copeland A."/>
            <person name="Lapidus A."/>
            <person name="Glavina del Rio T."/>
            <person name="Dalin E."/>
            <person name="Tice H."/>
            <person name="Bruce D.C."/>
            <person name="Goodwin L.A."/>
            <person name="Pitluck S."/>
            <person name="Saunders E."/>
            <person name="Brettin T."/>
            <person name="Detter C."/>
            <person name="Han C."/>
            <person name="Larimer F."/>
            <person name="Land M.L."/>
            <person name="Hauser L.J."/>
            <person name="Kyrpides N.C."/>
            <person name="Ovchinnikova G."/>
            <person name="Kathariou S."/>
            <person name="Ramaley R.F."/>
            <person name="Rodrigues D.F."/>
            <person name="Hendrix C."/>
            <person name="Richardson P."/>
            <person name="Tiedje J.M."/>
        </authorList>
    </citation>
    <scope>NUCLEOTIDE SEQUENCE [LARGE SCALE GENOMIC DNA]</scope>
    <source>
        <strain>ATCC BAA-1283 / AT1b</strain>
    </source>
</reference>
<keyword id="KW-0521">NADP</keyword>
<keyword id="KW-0560">Oxidoreductase</keyword>
<gene>
    <name evidence="1" type="primary">guaC</name>
    <name type="ordered locus">EAT1b_1825</name>
</gene>
<protein>
    <recommendedName>
        <fullName evidence="1">GMP reductase</fullName>
        <ecNumber evidence="1">1.7.1.7</ecNumber>
    </recommendedName>
    <alternativeName>
        <fullName evidence="1">Guanosine 5'-monophosphate oxidoreductase</fullName>
        <shortName evidence="1">Guanosine monophosphate reductase</shortName>
    </alternativeName>
</protein>
<evidence type="ECO:0000255" key="1">
    <source>
        <dbReference type="HAMAP-Rule" id="MF_01511"/>
    </source>
</evidence>
<sequence length="327" mass="35906">MDKVFDYEDIQLIPAKCIVDSRSECDPTVELGGFTFRLPVVPANMQTIIDEKVALMLAKNGYFYIMHRFNPETRLAFIQDMHERGLYASISVGVKDEEYGFIEVLKSTGHTPEFITIDIAHGHSNAVIRMIQHIKHHLPGSFVIAGNVGTPEAVRELEHAGADATKVGIGPGKVCITKIKTGFGTGGWQLAALRWCAKAATKPIIADGGIRTHGDIAKSIRFGASMVMIGSLFAGHDESPGETFEQDGKQLKEYFGSASEFQKGERKNVEGKKMFVEHKGALQDTLTEMEQDLQSAISYAGGDSLEALRTVDYVMVKNSIFNGDKVY</sequence>
<accession>C4L088</accession>
<proteinExistence type="inferred from homology"/>
<organism>
    <name type="scientific">Exiguobacterium sp. (strain ATCC BAA-1283 / AT1b)</name>
    <dbReference type="NCBI Taxonomy" id="360911"/>
    <lineage>
        <taxon>Bacteria</taxon>
        <taxon>Bacillati</taxon>
        <taxon>Bacillota</taxon>
        <taxon>Bacilli</taxon>
        <taxon>Bacillales</taxon>
        <taxon>Bacillales Family XII. Incertae Sedis</taxon>
        <taxon>Exiguobacterium</taxon>
    </lineage>
</organism>
<feature type="chain" id="PRO_1000215345" description="GMP reductase">
    <location>
        <begin position="1"/>
        <end position="327"/>
    </location>
</feature>
<feature type="active site" description="Thioimidate intermediate" evidence="1">
    <location>
        <position position="175"/>
    </location>
</feature>
<feature type="binding site" evidence="1">
    <location>
        <begin position="204"/>
        <end position="227"/>
    </location>
    <ligand>
        <name>NADP(+)</name>
        <dbReference type="ChEBI" id="CHEBI:58349"/>
    </ligand>
</feature>